<dbReference type="EC" id="4.2.1.109" evidence="1"/>
<dbReference type="EMBL" id="AAAB01008846">
    <property type="protein sequence ID" value="EAA06311.6"/>
    <property type="molecule type" value="Genomic_DNA"/>
</dbReference>
<dbReference type="SMR" id="Q7PS09"/>
<dbReference type="FunCoup" id="Q7PS09">
    <property type="interactions" value="986"/>
</dbReference>
<dbReference type="STRING" id="7165.Q7PS09"/>
<dbReference type="PaxDb" id="7165-AGAP000470-PA"/>
<dbReference type="EnsemblMetazoa" id="AGAP000470-RA">
    <property type="protein sequence ID" value="AGAP000470-PA"/>
    <property type="gene ID" value="AGAP000470"/>
</dbReference>
<dbReference type="GeneID" id="1271770"/>
<dbReference type="KEGG" id="aga:1271770"/>
<dbReference type="VEuPathDB" id="VectorBase:AGAMI1_009881"/>
<dbReference type="VEuPathDB" id="VectorBase:AGAP000470"/>
<dbReference type="eggNOG" id="KOG2631">
    <property type="taxonomic scope" value="Eukaryota"/>
</dbReference>
<dbReference type="HOGENOM" id="CLU_006033_4_0_1"/>
<dbReference type="InParanoid" id="Q7PS09"/>
<dbReference type="OMA" id="WFPGTSG"/>
<dbReference type="PhylomeDB" id="Q7PS09"/>
<dbReference type="UniPathway" id="UPA00904">
    <property type="reaction ID" value="UER00875"/>
</dbReference>
<dbReference type="Proteomes" id="UP000007062">
    <property type="component" value="Chromosome X"/>
</dbReference>
<dbReference type="GO" id="GO:0005737">
    <property type="term" value="C:cytoplasm"/>
    <property type="evidence" value="ECO:0000318"/>
    <property type="project" value="GO_Central"/>
</dbReference>
<dbReference type="GO" id="GO:0046570">
    <property type="term" value="F:methylthioribulose 1-phosphate dehydratase activity"/>
    <property type="evidence" value="ECO:0000250"/>
    <property type="project" value="UniProtKB"/>
</dbReference>
<dbReference type="GO" id="GO:0008270">
    <property type="term" value="F:zinc ion binding"/>
    <property type="evidence" value="ECO:0000250"/>
    <property type="project" value="UniProtKB"/>
</dbReference>
<dbReference type="GO" id="GO:0019509">
    <property type="term" value="P:L-methionine salvage from methylthioadenosine"/>
    <property type="evidence" value="ECO:0000318"/>
    <property type="project" value="GO_Central"/>
</dbReference>
<dbReference type="FunFam" id="3.40.225.10:FF:000003">
    <property type="entry name" value="Methylthioribulose-1-phosphate dehydratase"/>
    <property type="match status" value="1"/>
</dbReference>
<dbReference type="Gene3D" id="3.40.225.10">
    <property type="entry name" value="Class II aldolase/adducin N-terminal domain"/>
    <property type="match status" value="1"/>
</dbReference>
<dbReference type="HAMAP" id="MF_03116">
    <property type="entry name" value="Salvage_MtnB_euk"/>
    <property type="match status" value="1"/>
</dbReference>
<dbReference type="InterPro" id="IPR001303">
    <property type="entry name" value="Aldolase_II/adducin_N"/>
</dbReference>
<dbReference type="InterPro" id="IPR036409">
    <property type="entry name" value="Aldolase_II/adducin_N_sf"/>
</dbReference>
<dbReference type="InterPro" id="IPR017714">
    <property type="entry name" value="MethylthioRu-1-P_deHdtase_MtnB"/>
</dbReference>
<dbReference type="InterPro" id="IPR027514">
    <property type="entry name" value="Salvage_MtnB_euk"/>
</dbReference>
<dbReference type="NCBIfam" id="TIGR03328">
    <property type="entry name" value="salvage_mtnB"/>
    <property type="match status" value="1"/>
</dbReference>
<dbReference type="PANTHER" id="PTHR10640">
    <property type="entry name" value="METHYLTHIORIBULOSE-1-PHOSPHATE DEHYDRATASE"/>
    <property type="match status" value="1"/>
</dbReference>
<dbReference type="PANTHER" id="PTHR10640:SF7">
    <property type="entry name" value="METHYLTHIORIBULOSE-1-PHOSPHATE DEHYDRATASE"/>
    <property type="match status" value="1"/>
</dbReference>
<dbReference type="Pfam" id="PF00596">
    <property type="entry name" value="Aldolase_II"/>
    <property type="match status" value="1"/>
</dbReference>
<dbReference type="SMART" id="SM01007">
    <property type="entry name" value="Aldolase_II"/>
    <property type="match status" value="1"/>
</dbReference>
<dbReference type="SUPFAM" id="SSF53639">
    <property type="entry name" value="AraD/HMP-PK domain-like"/>
    <property type="match status" value="1"/>
</dbReference>
<organism>
    <name type="scientific">Anopheles gambiae</name>
    <name type="common">African malaria mosquito</name>
    <dbReference type="NCBI Taxonomy" id="7165"/>
    <lineage>
        <taxon>Eukaryota</taxon>
        <taxon>Metazoa</taxon>
        <taxon>Ecdysozoa</taxon>
        <taxon>Arthropoda</taxon>
        <taxon>Hexapoda</taxon>
        <taxon>Insecta</taxon>
        <taxon>Pterygota</taxon>
        <taxon>Neoptera</taxon>
        <taxon>Endopterygota</taxon>
        <taxon>Diptera</taxon>
        <taxon>Nematocera</taxon>
        <taxon>Culicoidea</taxon>
        <taxon>Culicidae</taxon>
        <taxon>Anophelinae</taxon>
        <taxon>Anopheles</taxon>
    </lineage>
</organism>
<keyword id="KW-0028">Amino-acid biosynthesis</keyword>
<keyword id="KW-0963">Cytoplasm</keyword>
<keyword id="KW-0456">Lyase</keyword>
<keyword id="KW-0479">Metal-binding</keyword>
<keyword id="KW-0486">Methionine biosynthesis</keyword>
<keyword id="KW-1185">Reference proteome</keyword>
<keyword id="KW-0862">Zinc</keyword>
<accession>Q7PS09</accession>
<feature type="chain" id="PRO_0000393779" description="Probable methylthioribulose-1-phosphate dehydratase">
    <location>
        <begin position="1"/>
        <end position="231"/>
    </location>
</feature>
<feature type="active site" description="Proton donor/acceptor" evidence="1">
    <location>
        <position position="132"/>
    </location>
</feature>
<feature type="binding site" evidence="1">
    <location>
        <position position="90"/>
    </location>
    <ligand>
        <name>substrate</name>
    </ligand>
</feature>
<feature type="binding site" evidence="1">
    <location>
        <position position="108"/>
    </location>
    <ligand>
        <name>Zn(2+)</name>
        <dbReference type="ChEBI" id="CHEBI:29105"/>
    </ligand>
</feature>
<feature type="binding site" evidence="1">
    <location>
        <position position="110"/>
    </location>
    <ligand>
        <name>Zn(2+)</name>
        <dbReference type="ChEBI" id="CHEBI:29105"/>
    </ligand>
</feature>
<feature type="binding site" evidence="1">
    <location>
        <position position="188"/>
    </location>
    <ligand>
        <name>Zn(2+)</name>
        <dbReference type="ChEBI" id="CHEBI:29105"/>
    </ligand>
</feature>
<gene>
    <name type="ORF">AGAP000470</name>
</gene>
<reference key="1">
    <citation type="journal article" date="2002" name="Science">
        <title>The genome sequence of the malaria mosquito Anopheles gambiae.</title>
        <authorList>
            <person name="Holt R.A."/>
            <person name="Subramanian G.M."/>
            <person name="Halpern A."/>
            <person name="Sutton G.G."/>
            <person name="Charlab R."/>
            <person name="Nusskern D.R."/>
            <person name="Wincker P."/>
            <person name="Clark A.G."/>
            <person name="Ribeiro J.M.C."/>
            <person name="Wides R."/>
            <person name="Salzberg S.L."/>
            <person name="Loftus B.J."/>
            <person name="Yandell M.D."/>
            <person name="Majoros W.H."/>
            <person name="Rusch D.B."/>
            <person name="Lai Z."/>
            <person name="Kraft C.L."/>
            <person name="Abril J.F."/>
            <person name="Anthouard V."/>
            <person name="Arensburger P."/>
            <person name="Atkinson P.W."/>
            <person name="Baden H."/>
            <person name="de Berardinis V."/>
            <person name="Baldwin D."/>
            <person name="Benes V."/>
            <person name="Biedler J."/>
            <person name="Blass C."/>
            <person name="Bolanos R."/>
            <person name="Boscus D."/>
            <person name="Barnstead M."/>
            <person name="Cai S."/>
            <person name="Center A."/>
            <person name="Chaturverdi K."/>
            <person name="Christophides G.K."/>
            <person name="Chrystal M.A.M."/>
            <person name="Clamp M."/>
            <person name="Cravchik A."/>
            <person name="Curwen V."/>
            <person name="Dana A."/>
            <person name="Delcher A."/>
            <person name="Dew I."/>
            <person name="Evans C.A."/>
            <person name="Flanigan M."/>
            <person name="Grundschober-Freimoser A."/>
            <person name="Friedli L."/>
            <person name="Gu Z."/>
            <person name="Guan P."/>
            <person name="Guigo R."/>
            <person name="Hillenmeyer M.E."/>
            <person name="Hladun S.L."/>
            <person name="Hogan J.R."/>
            <person name="Hong Y.S."/>
            <person name="Hoover J."/>
            <person name="Jaillon O."/>
            <person name="Ke Z."/>
            <person name="Kodira C.D."/>
            <person name="Kokoza E."/>
            <person name="Koutsos A."/>
            <person name="Letunic I."/>
            <person name="Levitsky A.A."/>
            <person name="Liang Y."/>
            <person name="Lin J.-J."/>
            <person name="Lobo N.F."/>
            <person name="Lopez J.R."/>
            <person name="Malek J.A."/>
            <person name="McIntosh T.C."/>
            <person name="Meister S."/>
            <person name="Miller J.R."/>
            <person name="Mobarry C."/>
            <person name="Mongin E."/>
            <person name="Murphy S.D."/>
            <person name="O'Brochta D.A."/>
            <person name="Pfannkoch C."/>
            <person name="Qi R."/>
            <person name="Regier M.A."/>
            <person name="Remington K."/>
            <person name="Shao H."/>
            <person name="Sharakhova M.V."/>
            <person name="Sitter C.D."/>
            <person name="Shetty J."/>
            <person name="Smith T.J."/>
            <person name="Strong R."/>
            <person name="Sun J."/>
            <person name="Thomasova D."/>
            <person name="Ton L.Q."/>
            <person name="Topalis P."/>
            <person name="Tu Z.J."/>
            <person name="Unger M.F."/>
            <person name="Walenz B."/>
            <person name="Wang A.H."/>
            <person name="Wang J."/>
            <person name="Wang M."/>
            <person name="Wang X."/>
            <person name="Woodford K.J."/>
            <person name="Wortman J.R."/>
            <person name="Wu M."/>
            <person name="Yao A."/>
            <person name="Zdobnov E.M."/>
            <person name="Zhang H."/>
            <person name="Zhao Q."/>
            <person name="Zhao S."/>
            <person name="Zhu S.C."/>
            <person name="Zhimulev I."/>
            <person name="Coluzzi M."/>
            <person name="della Torre A."/>
            <person name="Roth C.W."/>
            <person name="Louis C."/>
            <person name="Kalush F."/>
            <person name="Mural R.J."/>
            <person name="Myers E.W."/>
            <person name="Adams M.D."/>
            <person name="Smith H.O."/>
            <person name="Broder S."/>
            <person name="Gardner M.J."/>
            <person name="Fraser C.M."/>
            <person name="Birney E."/>
            <person name="Bork P."/>
            <person name="Brey P.T."/>
            <person name="Venter J.C."/>
            <person name="Weissenbach J."/>
            <person name="Kafatos F.C."/>
            <person name="Collins F.H."/>
            <person name="Hoffman S.L."/>
        </authorList>
    </citation>
    <scope>NUCLEOTIDE SEQUENCE [LARGE SCALE GENOMIC DNA]</scope>
    <source>
        <strain>PEST</strain>
    </source>
</reference>
<evidence type="ECO:0000255" key="1">
    <source>
        <dbReference type="HAMAP-Rule" id="MF_03116"/>
    </source>
</evidence>
<protein>
    <recommendedName>
        <fullName evidence="1">Probable methylthioribulose-1-phosphate dehydratase</fullName>
        <shortName evidence="1">MTRu-1-P dehydratase</shortName>
        <ecNumber evidence="1">4.2.1.109</ecNumber>
    </recommendedName>
</protein>
<proteinExistence type="inferred from homology"/>
<name>MTNB_ANOGA</name>
<comment type="function">
    <text evidence="1">Catalyzes the dehydration of methylthioribulose-1-phosphate (MTRu-1-P) into 2,3-diketo-5-methylthiopentyl-1-phosphate (DK-MTP-1-P).</text>
</comment>
<comment type="catalytic activity">
    <reaction evidence="1">
        <text>5-(methylsulfanyl)-D-ribulose 1-phosphate = 5-methylsulfanyl-2,3-dioxopentyl phosphate + H2O</text>
        <dbReference type="Rhea" id="RHEA:15549"/>
        <dbReference type="ChEBI" id="CHEBI:15377"/>
        <dbReference type="ChEBI" id="CHEBI:58548"/>
        <dbReference type="ChEBI" id="CHEBI:58828"/>
        <dbReference type="EC" id="4.2.1.109"/>
    </reaction>
</comment>
<comment type="cofactor">
    <cofactor evidence="1">
        <name>Zn(2+)</name>
        <dbReference type="ChEBI" id="CHEBI:29105"/>
    </cofactor>
    <text evidence="1">Binds 1 zinc ion per subunit.</text>
</comment>
<comment type="pathway">
    <text evidence="1">Amino-acid biosynthesis; L-methionine biosynthesis via salvage pathway; L-methionine from S-methyl-5-thio-alpha-D-ribose 1-phosphate: step 2/6.</text>
</comment>
<comment type="subcellular location">
    <subcellularLocation>
        <location evidence="1">Cytoplasm</location>
    </subcellularLocation>
</comment>
<comment type="similarity">
    <text evidence="1">Belongs to the aldolase class II family. MtnB subfamily.</text>
</comment>
<sequence length="231" mass="26382">MASGRSSIYQDLSEEHPRKLIPELCKQFYNLGWVTGTGGGISIKLDDEIYIAPSGVQKERIQPDDLFIQNIEGDDLQTPPDYKKLTKSQCTPLFMLAYKERSAGAVIHTHSPAAVMTTLLWPGKEFRCTHLEMIKGIYDYELNRNLMYDEELVVPIIENTLFEKDLEESMANALRDYPGTSAILVRRHGVYVWGHNWQKAKTMAECYDYLFSLAVEMHKVGLDANAVPKRY</sequence>